<comment type="function">
    <text evidence="1">Attaches a formyl group to the free amino group of methionyl-tRNA(fMet). The formyl group appears to play a dual role in the initiator identity of N-formylmethionyl-tRNA by promoting its recognition by IF2 and preventing the misappropriation of this tRNA by the elongation apparatus.</text>
</comment>
<comment type="catalytic activity">
    <reaction evidence="1">
        <text>L-methionyl-tRNA(fMet) + (6R)-10-formyltetrahydrofolate = N-formyl-L-methionyl-tRNA(fMet) + (6S)-5,6,7,8-tetrahydrofolate + H(+)</text>
        <dbReference type="Rhea" id="RHEA:24380"/>
        <dbReference type="Rhea" id="RHEA-COMP:9952"/>
        <dbReference type="Rhea" id="RHEA-COMP:9953"/>
        <dbReference type="ChEBI" id="CHEBI:15378"/>
        <dbReference type="ChEBI" id="CHEBI:57453"/>
        <dbReference type="ChEBI" id="CHEBI:78530"/>
        <dbReference type="ChEBI" id="CHEBI:78844"/>
        <dbReference type="ChEBI" id="CHEBI:195366"/>
        <dbReference type="EC" id="2.1.2.9"/>
    </reaction>
</comment>
<comment type="similarity">
    <text evidence="1">Belongs to the Fmt family.</text>
</comment>
<keyword id="KW-0648">Protein biosynthesis</keyword>
<keyword id="KW-1185">Reference proteome</keyword>
<keyword id="KW-0808">Transferase</keyword>
<gene>
    <name evidence="1" type="primary">fmt</name>
    <name type="ordered locus">Hhal_2322</name>
</gene>
<feature type="chain" id="PRO_1000118482" description="Methionyl-tRNA formyltransferase">
    <location>
        <begin position="1"/>
        <end position="310"/>
    </location>
</feature>
<feature type="binding site" evidence="1">
    <location>
        <begin position="110"/>
        <end position="113"/>
    </location>
    <ligand>
        <name>(6S)-5,6,7,8-tetrahydrofolate</name>
        <dbReference type="ChEBI" id="CHEBI:57453"/>
    </ligand>
</feature>
<protein>
    <recommendedName>
        <fullName evidence="1">Methionyl-tRNA formyltransferase</fullName>
        <ecNumber evidence="1">2.1.2.9</ecNumber>
    </recommendedName>
</protein>
<evidence type="ECO:0000255" key="1">
    <source>
        <dbReference type="HAMAP-Rule" id="MF_00182"/>
    </source>
</evidence>
<accession>A1WZH3</accession>
<sequence length="310" mass="32830">MAARIVFAGTPDFAVPGLDALVEAGVRPVAVFTQPDRPAGRGRRLTPPPVKRAAERHGLGVHQPERLGAEEAEQIRALAPDLMVVVAYGQILRRNVLDVPRFGCVNVHASLLPRWRGAAPIQRALLAGDEQTGVTLMQMDEGLDTGPMLARKATPISADETAGSLHDRLARIGADLLVAHLPEILAGAITPEPQPDDGVTYAAKLTNDESWLDPTEPAEQLERRVRALAPVPGARLQLGETPVRVLAARACAGRPEDRAGTVAAVGSGGIEVATGEGRLEITRLKPAGGREQTAADYLNGRRLVPGEPVQ</sequence>
<name>FMT_HALHL</name>
<reference key="1">
    <citation type="submission" date="2006-12" db="EMBL/GenBank/DDBJ databases">
        <title>Complete sequence of Halorhodospira halophila SL1.</title>
        <authorList>
            <consortium name="US DOE Joint Genome Institute"/>
            <person name="Copeland A."/>
            <person name="Lucas S."/>
            <person name="Lapidus A."/>
            <person name="Barry K."/>
            <person name="Detter J.C."/>
            <person name="Glavina del Rio T."/>
            <person name="Hammon N."/>
            <person name="Israni S."/>
            <person name="Dalin E."/>
            <person name="Tice H."/>
            <person name="Pitluck S."/>
            <person name="Saunders E."/>
            <person name="Brettin T."/>
            <person name="Bruce D."/>
            <person name="Han C."/>
            <person name="Tapia R."/>
            <person name="Schmutz J."/>
            <person name="Larimer F."/>
            <person name="Land M."/>
            <person name="Hauser L."/>
            <person name="Kyrpides N."/>
            <person name="Mikhailova N."/>
            <person name="Hoff W."/>
            <person name="Richardson P."/>
        </authorList>
    </citation>
    <scope>NUCLEOTIDE SEQUENCE [LARGE SCALE GENOMIC DNA]</scope>
    <source>
        <strain>DSM 244 / SL1</strain>
    </source>
</reference>
<dbReference type="EC" id="2.1.2.9" evidence="1"/>
<dbReference type="EMBL" id="CP000544">
    <property type="protein sequence ID" value="ABM63085.1"/>
    <property type="molecule type" value="Genomic_DNA"/>
</dbReference>
<dbReference type="RefSeq" id="WP_011815107.1">
    <property type="nucleotide sequence ID" value="NC_008789.1"/>
</dbReference>
<dbReference type="SMR" id="A1WZH3"/>
<dbReference type="STRING" id="349124.Hhal_2322"/>
<dbReference type="KEGG" id="hha:Hhal_2322"/>
<dbReference type="eggNOG" id="COG0223">
    <property type="taxonomic scope" value="Bacteria"/>
</dbReference>
<dbReference type="HOGENOM" id="CLU_033347_1_2_6"/>
<dbReference type="OrthoDB" id="9802815at2"/>
<dbReference type="Proteomes" id="UP000000647">
    <property type="component" value="Chromosome"/>
</dbReference>
<dbReference type="GO" id="GO:0005829">
    <property type="term" value="C:cytosol"/>
    <property type="evidence" value="ECO:0007669"/>
    <property type="project" value="TreeGrafter"/>
</dbReference>
<dbReference type="GO" id="GO:0004479">
    <property type="term" value="F:methionyl-tRNA formyltransferase activity"/>
    <property type="evidence" value="ECO:0007669"/>
    <property type="project" value="UniProtKB-UniRule"/>
</dbReference>
<dbReference type="CDD" id="cd08646">
    <property type="entry name" value="FMT_core_Met-tRNA-FMT_N"/>
    <property type="match status" value="1"/>
</dbReference>
<dbReference type="CDD" id="cd08704">
    <property type="entry name" value="Met_tRNA_FMT_C"/>
    <property type="match status" value="1"/>
</dbReference>
<dbReference type="FunFam" id="3.40.50.12230:FF:000001">
    <property type="entry name" value="Methionyl-tRNA formyltransferase"/>
    <property type="match status" value="1"/>
</dbReference>
<dbReference type="Gene3D" id="3.40.50.12230">
    <property type="match status" value="1"/>
</dbReference>
<dbReference type="HAMAP" id="MF_00182">
    <property type="entry name" value="Formyl_trans"/>
    <property type="match status" value="1"/>
</dbReference>
<dbReference type="InterPro" id="IPR005794">
    <property type="entry name" value="Fmt"/>
</dbReference>
<dbReference type="InterPro" id="IPR005793">
    <property type="entry name" value="Formyl_trans_C"/>
</dbReference>
<dbReference type="InterPro" id="IPR002376">
    <property type="entry name" value="Formyl_transf_N"/>
</dbReference>
<dbReference type="InterPro" id="IPR036477">
    <property type="entry name" value="Formyl_transf_N_sf"/>
</dbReference>
<dbReference type="InterPro" id="IPR011034">
    <property type="entry name" value="Formyl_transferase-like_C_sf"/>
</dbReference>
<dbReference type="InterPro" id="IPR001555">
    <property type="entry name" value="GART_AS"/>
</dbReference>
<dbReference type="InterPro" id="IPR044135">
    <property type="entry name" value="Met-tRNA-FMT_C"/>
</dbReference>
<dbReference type="InterPro" id="IPR041711">
    <property type="entry name" value="Met-tRNA-FMT_N"/>
</dbReference>
<dbReference type="NCBIfam" id="TIGR00460">
    <property type="entry name" value="fmt"/>
    <property type="match status" value="1"/>
</dbReference>
<dbReference type="PANTHER" id="PTHR11138">
    <property type="entry name" value="METHIONYL-TRNA FORMYLTRANSFERASE"/>
    <property type="match status" value="1"/>
</dbReference>
<dbReference type="PANTHER" id="PTHR11138:SF5">
    <property type="entry name" value="METHIONYL-TRNA FORMYLTRANSFERASE, MITOCHONDRIAL"/>
    <property type="match status" value="1"/>
</dbReference>
<dbReference type="Pfam" id="PF02911">
    <property type="entry name" value="Formyl_trans_C"/>
    <property type="match status" value="1"/>
</dbReference>
<dbReference type="Pfam" id="PF00551">
    <property type="entry name" value="Formyl_trans_N"/>
    <property type="match status" value="1"/>
</dbReference>
<dbReference type="SUPFAM" id="SSF50486">
    <property type="entry name" value="FMT C-terminal domain-like"/>
    <property type="match status" value="1"/>
</dbReference>
<dbReference type="SUPFAM" id="SSF53328">
    <property type="entry name" value="Formyltransferase"/>
    <property type="match status" value="1"/>
</dbReference>
<dbReference type="PROSITE" id="PS00373">
    <property type="entry name" value="GART"/>
    <property type="match status" value="1"/>
</dbReference>
<proteinExistence type="inferred from homology"/>
<organism>
    <name type="scientific">Halorhodospira halophila (strain DSM 244 / SL1)</name>
    <name type="common">Ectothiorhodospira halophila (strain DSM 244 / SL1)</name>
    <dbReference type="NCBI Taxonomy" id="349124"/>
    <lineage>
        <taxon>Bacteria</taxon>
        <taxon>Pseudomonadati</taxon>
        <taxon>Pseudomonadota</taxon>
        <taxon>Gammaproteobacteria</taxon>
        <taxon>Chromatiales</taxon>
        <taxon>Ectothiorhodospiraceae</taxon>
        <taxon>Halorhodospira</taxon>
    </lineage>
</organism>